<accession>A6ZLA1</accession>
<comment type="function">
    <text evidence="4">Component of the microsomal membrane bound fatty acid elongation system, which produces the 26-carbon very long-chain fatty acids (VLCFA) from palmitate. Catalyzes the reduction of the 3-ketoacyl-CoA intermediate that is formed in each cycle of fatty acid elongation. VLCFAs serve as precursors for ceramide and sphingolipids.</text>
</comment>
<comment type="catalytic activity">
    <reaction evidence="4">
        <text>a very-long-chain (3R)-3-hydroxyacyl-CoA + NADP(+) = a very-long-chain 3-oxoacyl-CoA + NADPH + H(+)</text>
        <dbReference type="Rhea" id="RHEA:48680"/>
        <dbReference type="ChEBI" id="CHEBI:15378"/>
        <dbReference type="ChEBI" id="CHEBI:57783"/>
        <dbReference type="ChEBI" id="CHEBI:58349"/>
        <dbReference type="ChEBI" id="CHEBI:85440"/>
        <dbReference type="ChEBI" id="CHEBI:90725"/>
        <dbReference type="EC" id="1.1.1.330"/>
    </reaction>
</comment>
<comment type="pathway">
    <text evidence="3">Lipid metabolism; fatty acid biosynthesis.</text>
</comment>
<comment type="subunit">
    <text evidence="4">Interacts with the fatty acid elongation system components ELO3 and TSC13.</text>
</comment>
<comment type="subcellular location">
    <subcellularLocation>
        <location evidence="4">Endoplasmic reticulum membrane</location>
        <topology evidence="4">Single-pass membrane protein</topology>
    </subcellularLocation>
</comment>
<comment type="similarity">
    <text evidence="4">Belongs to the short-chain dehydrogenases/reductases (SDR) family.</text>
</comment>
<proteinExistence type="inferred from homology"/>
<protein>
    <recommendedName>
        <fullName evidence="4">Very-long-chain 3-oxoacyl-CoA reductase</fullName>
        <ecNumber evidence="4">1.1.1.330</ecNumber>
    </recommendedName>
    <alternativeName>
        <fullName evidence="4">3-ketoacyl-CoA reductase</fullName>
        <shortName evidence="4">3-ketoreductase</shortName>
        <shortName evidence="4">KAR</shortName>
    </alternativeName>
    <alternativeName>
        <fullName evidence="4">Microsomal beta-keto-reductase</fullName>
    </alternativeName>
</protein>
<organism>
    <name type="scientific">Saccharomyces cerevisiae (strain YJM789)</name>
    <name type="common">Baker's yeast</name>
    <dbReference type="NCBI Taxonomy" id="307796"/>
    <lineage>
        <taxon>Eukaryota</taxon>
        <taxon>Fungi</taxon>
        <taxon>Dikarya</taxon>
        <taxon>Ascomycota</taxon>
        <taxon>Saccharomycotina</taxon>
        <taxon>Saccharomycetes</taxon>
        <taxon>Saccharomycetales</taxon>
        <taxon>Saccharomycetaceae</taxon>
        <taxon>Saccharomyces</taxon>
    </lineage>
</organism>
<dbReference type="EC" id="1.1.1.330" evidence="4"/>
<dbReference type="EMBL" id="AAFW02000011">
    <property type="protein sequence ID" value="EDN64770.1"/>
    <property type="molecule type" value="Genomic_DNA"/>
</dbReference>
<dbReference type="SMR" id="A6ZLA1"/>
<dbReference type="HOGENOM" id="CLU_010194_38_0_1"/>
<dbReference type="UniPathway" id="UPA00094"/>
<dbReference type="Proteomes" id="UP000007060">
    <property type="component" value="Unassembled WGS sequence"/>
</dbReference>
<dbReference type="GO" id="GO:0005789">
    <property type="term" value="C:endoplasmic reticulum membrane"/>
    <property type="evidence" value="ECO:0007669"/>
    <property type="project" value="UniProtKB-SubCell"/>
</dbReference>
<dbReference type="GO" id="GO:0045703">
    <property type="term" value="F:ketoreductase activity"/>
    <property type="evidence" value="ECO:0007669"/>
    <property type="project" value="UniProtKB-UniRule"/>
</dbReference>
<dbReference type="GO" id="GO:0141040">
    <property type="term" value="F:very-long-chain 3-oxoacyl-CoA reductase activity"/>
    <property type="evidence" value="ECO:0007669"/>
    <property type="project" value="UniProtKB-EC"/>
</dbReference>
<dbReference type="GO" id="GO:0030497">
    <property type="term" value="P:fatty acid elongation"/>
    <property type="evidence" value="ECO:0007669"/>
    <property type="project" value="UniProtKB-UniRule"/>
</dbReference>
<dbReference type="CDD" id="cd05356">
    <property type="entry name" value="17beta-HSD1_like_SDR_c"/>
    <property type="match status" value="1"/>
</dbReference>
<dbReference type="FunFam" id="3.40.50.720:FF:000317">
    <property type="entry name" value="Very-long-chain 3-oxoacyl-CoA reductase"/>
    <property type="match status" value="1"/>
</dbReference>
<dbReference type="Gene3D" id="3.40.50.720">
    <property type="entry name" value="NAD(P)-binding Rossmann-like Domain"/>
    <property type="match status" value="1"/>
</dbReference>
<dbReference type="HAMAP" id="MF_03107">
    <property type="entry name" value="3_ketoreductase"/>
    <property type="match status" value="1"/>
</dbReference>
<dbReference type="InterPro" id="IPR027533">
    <property type="entry name" value="3_ketoreductase_fungal"/>
</dbReference>
<dbReference type="InterPro" id="IPR036291">
    <property type="entry name" value="NAD(P)-bd_dom_sf"/>
</dbReference>
<dbReference type="InterPro" id="IPR020904">
    <property type="entry name" value="Sc_DH/Rdtase_CS"/>
</dbReference>
<dbReference type="InterPro" id="IPR002347">
    <property type="entry name" value="SDR_fam"/>
</dbReference>
<dbReference type="PANTHER" id="PTHR43086:SF2">
    <property type="entry name" value="HYDROXYSTEROID DEHYDROGENASE-LIKE PROTEIN 1"/>
    <property type="match status" value="1"/>
</dbReference>
<dbReference type="PANTHER" id="PTHR43086">
    <property type="entry name" value="VERY-LONG-CHAIN 3-OXOOACYL-COA REDUCTASE"/>
    <property type="match status" value="1"/>
</dbReference>
<dbReference type="Pfam" id="PF00106">
    <property type="entry name" value="adh_short"/>
    <property type="match status" value="1"/>
</dbReference>
<dbReference type="PIRSF" id="PIRSF000126">
    <property type="entry name" value="11-beta-HSD1"/>
    <property type="match status" value="1"/>
</dbReference>
<dbReference type="PRINTS" id="PR00081">
    <property type="entry name" value="GDHRDH"/>
</dbReference>
<dbReference type="SUPFAM" id="SSF51735">
    <property type="entry name" value="NAD(P)-binding Rossmann-fold domains"/>
    <property type="match status" value="1"/>
</dbReference>
<dbReference type="PROSITE" id="PS00061">
    <property type="entry name" value="ADH_SHORT"/>
    <property type="match status" value="1"/>
</dbReference>
<sequence length="347" mass="38753">MTFMQQLQEAGERFRCINGLLWVVFGLGVLKCTTLSLRFLALIFDLFLLPAVNFDKYGAKSGKYCVITGASDGIGKEFARQMAKRGFNLVLISRTQSKLEALQKELEDQHHVVVKILAIDIAEDKESNYESIKELCAQLPITVLVNNVGQSHSIPVPFLETEEKELRDIITINNTATLLITQIIAPKIVETVKAENKKSGTRGLILTMGSFGGLIPTPLLATYSGSKSFLQSWSNSLAGELSKDAIDVELIISYLVTSSMSKIRRSSLMIPNPQQFVKSTLRSVGRRCGSQERYATMTPYWAHAVYQFVITETFGVYSKIVNSINYSFHKSIRIRALKKAARQVKKE</sequence>
<keyword id="KW-0256">Endoplasmic reticulum</keyword>
<keyword id="KW-0275">Fatty acid biosynthesis</keyword>
<keyword id="KW-0276">Fatty acid metabolism</keyword>
<keyword id="KW-0444">Lipid biosynthesis</keyword>
<keyword id="KW-0443">Lipid metabolism</keyword>
<keyword id="KW-0472">Membrane</keyword>
<keyword id="KW-0521">NADP</keyword>
<keyword id="KW-0560">Oxidoreductase</keyword>
<keyword id="KW-0812">Transmembrane</keyword>
<keyword id="KW-1133">Transmembrane helix</keyword>
<reference key="1">
    <citation type="journal article" date="2007" name="Proc. Natl. Acad. Sci. U.S.A.">
        <title>Genome sequencing and comparative analysis of Saccharomyces cerevisiae strain YJM789.</title>
        <authorList>
            <person name="Wei W."/>
            <person name="McCusker J.H."/>
            <person name="Hyman R.W."/>
            <person name="Jones T."/>
            <person name="Ning Y."/>
            <person name="Cao Z."/>
            <person name="Gu Z."/>
            <person name="Bruno D."/>
            <person name="Miranda M."/>
            <person name="Nguyen M."/>
            <person name="Wilhelmy J."/>
            <person name="Komp C."/>
            <person name="Tamse R."/>
            <person name="Wang X."/>
            <person name="Jia P."/>
            <person name="Luedi P."/>
            <person name="Oefner P.J."/>
            <person name="David L."/>
            <person name="Dietrich F.S."/>
            <person name="Li Y."/>
            <person name="Davis R.W."/>
            <person name="Steinmetz L.M."/>
        </authorList>
    </citation>
    <scope>NUCLEOTIDE SEQUENCE [LARGE SCALE GENOMIC DNA]</scope>
    <source>
        <strain>YJM789</strain>
    </source>
</reference>
<gene>
    <name type="ORF">SCY_0371</name>
</gene>
<evidence type="ECO:0000250" key="1">
    <source>
        <dbReference type="UniProtKB" id="L0E2Z4"/>
    </source>
</evidence>
<evidence type="ECO:0000250" key="2">
    <source>
        <dbReference type="UniProtKB" id="O93868"/>
    </source>
</evidence>
<evidence type="ECO:0000250" key="3">
    <source>
        <dbReference type="UniProtKB" id="P38286"/>
    </source>
</evidence>
<evidence type="ECO:0000255" key="4">
    <source>
        <dbReference type="HAMAP-Rule" id="MF_03107"/>
    </source>
</evidence>
<name>MKAR_YEAS7</name>
<feature type="chain" id="PRO_0000357327" description="Very-long-chain 3-oxoacyl-CoA reductase">
    <location>
        <begin position="1"/>
        <end position="347"/>
    </location>
</feature>
<feature type="transmembrane region" description="Helical" evidence="4">
    <location>
        <begin position="20"/>
        <end position="40"/>
    </location>
</feature>
<feature type="active site" description="Proton donor" evidence="2">
    <location>
        <position position="223"/>
    </location>
</feature>
<feature type="active site" description="Lowers pKa of active site Tyr" evidence="2">
    <location>
        <position position="227"/>
    </location>
</feature>
<feature type="binding site" evidence="1">
    <location>
        <position position="66"/>
    </location>
    <ligand>
        <name>NADP(+)</name>
        <dbReference type="ChEBI" id="CHEBI:58349"/>
    </ligand>
</feature>
<feature type="binding site" evidence="1">
    <location>
        <position position="120"/>
    </location>
    <ligand>
        <name>NADP(+)</name>
        <dbReference type="ChEBI" id="CHEBI:58349"/>
    </ligand>
</feature>
<feature type="binding site" evidence="2">
    <location>
        <position position="147"/>
    </location>
    <ligand>
        <name>NADP(+)</name>
        <dbReference type="ChEBI" id="CHEBI:58349"/>
    </ligand>
</feature>
<feature type="binding site" evidence="2">
    <location>
        <position position="223"/>
    </location>
    <ligand>
        <name>NADP(+)</name>
        <dbReference type="ChEBI" id="CHEBI:58349"/>
    </ligand>
</feature>
<feature type="binding site" evidence="2">
    <location>
        <position position="227"/>
    </location>
    <ligand>
        <name>NADP(+)</name>
        <dbReference type="ChEBI" id="CHEBI:58349"/>
    </ligand>
</feature>
<feature type="binding site" evidence="2">
    <location>
        <position position="256"/>
    </location>
    <ligand>
        <name>NADP(+)</name>
        <dbReference type="ChEBI" id="CHEBI:58349"/>
    </ligand>
</feature>
<feature type="binding site" evidence="1">
    <location>
        <position position="258"/>
    </location>
    <ligand>
        <name>NADP(+)</name>
        <dbReference type="ChEBI" id="CHEBI:58349"/>
    </ligand>
</feature>